<protein>
    <recommendedName>
        <fullName evidence="6">Acid-sensing ion channel 4-B</fullName>
        <shortName evidence="6">ASIC4-B</shortName>
    </recommendedName>
    <alternativeName>
        <fullName evidence="5">Acid-sensing ion channel 4.2</fullName>
    </alternativeName>
    <alternativeName>
        <fullName>Amiloride-sensitive cation channel 4-B</fullName>
    </alternativeName>
    <alternativeName>
        <fullName evidence="5">ZASIC4.2</fullName>
    </alternativeName>
</protein>
<name>ASI4B_DANRE</name>
<feature type="chain" id="PRO_0000181308" description="Acid-sensing ion channel 4-B">
    <location>
        <begin position="1"/>
        <end position="558"/>
    </location>
</feature>
<feature type="topological domain" description="Cytoplasmic" evidence="6">
    <location>
        <begin position="1"/>
        <end position="71"/>
    </location>
</feature>
<feature type="transmembrane region" description="Helical" evidence="2">
    <location>
        <begin position="72"/>
        <end position="92"/>
    </location>
</feature>
<feature type="topological domain" description="Extracellular" evidence="6">
    <location>
        <begin position="93"/>
        <end position="433"/>
    </location>
</feature>
<feature type="transmembrane region" description="Helical" evidence="2">
    <location>
        <begin position="434"/>
        <end position="454"/>
    </location>
</feature>
<feature type="topological domain" description="Cytoplasmic" evidence="6">
    <location>
        <begin position="455"/>
        <end position="558"/>
    </location>
</feature>
<feature type="short sequence motif" description="GAS motif; ion selectivity filter" evidence="1">
    <location>
        <begin position="450"/>
        <end position="452"/>
    </location>
</feature>
<feature type="glycosylation site" description="N-linked (GlcNAc...) asparagine" evidence="2">
    <location>
        <position position="140"/>
    </location>
</feature>
<feature type="glycosylation site" description="N-linked (GlcNAc...) asparagine" evidence="2">
    <location>
        <position position="183"/>
    </location>
</feature>
<feature type="glycosylation site" description="N-linked (GlcNAc...) asparagine" evidence="2">
    <location>
        <position position="188"/>
    </location>
</feature>
<feature type="glycosylation site" description="N-linked (GlcNAc...) asparagine" evidence="2">
    <location>
        <position position="210"/>
    </location>
</feature>
<feature type="glycosylation site" description="N-linked (GlcNAc...) asparagine" evidence="2">
    <location>
        <position position="245"/>
    </location>
</feature>
<feature type="glycosylation site" description="N-linked (GlcNAc...) asparagine" evidence="2">
    <location>
        <position position="374"/>
    </location>
</feature>
<feature type="disulfide bond" evidence="1">
    <location>
        <begin position="120"/>
        <end position="204"/>
    </location>
</feature>
<feature type="disulfide bond" evidence="1">
    <location>
        <begin position="182"/>
        <end position="189"/>
    </location>
</feature>
<feature type="disulfide bond" evidence="1">
    <location>
        <begin position="298"/>
        <end position="373"/>
    </location>
</feature>
<feature type="disulfide bond" evidence="1">
    <location>
        <begin position="317"/>
        <end position="369"/>
    </location>
</feature>
<feature type="disulfide bond" evidence="1">
    <location>
        <begin position="321"/>
        <end position="367"/>
    </location>
</feature>
<feature type="disulfide bond" evidence="1">
    <location>
        <begin position="330"/>
        <end position="351"/>
    </location>
</feature>
<feature type="disulfide bond" evidence="1">
    <location>
        <begin position="332"/>
        <end position="344"/>
    </location>
</feature>
<gene>
    <name evidence="6" type="primary">asic4b</name>
    <name type="synonym">accn4b</name>
</gene>
<reference key="1">
    <citation type="journal article" date="2004" name="J. Biol. Chem.">
        <title>A family of acid-sensing ion channels (ASICs) from the zebrafish: widespread expression in the central nervous system suggests a conserved role in neuronal communication.</title>
        <authorList>
            <person name="Paukert M."/>
            <person name="Sidi S."/>
            <person name="Russell C."/>
            <person name="Siba M."/>
            <person name="Wilson S.W."/>
            <person name="Nicolson T."/>
            <person name="Gruender S."/>
        </authorList>
    </citation>
    <scope>NUCLEOTIDE SEQUENCE [MRNA]</scope>
    <scope>FUNCTION</scope>
    <scope>TISSUE SPECIFICITY</scope>
</reference>
<reference key="2">
    <citation type="journal article" date="2007" name="J. Biol. Chem.">
        <title>Zebrafish acid-sensing ion channel (ASIC) 4, characterization of homo- and heteromeric channels, and identification of regions important for activation by H+.</title>
        <authorList>
            <person name="Chen X."/>
            <person name="Polleichtner G."/>
            <person name="Kadurin I."/>
            <person name="Gruender S."/>
        </authorList>
    </citation>
    <scope>FUNCTION</scope>
    <scope>TRANSPORTER ACTIVITY</scope>
    <scope>SUBCELLULAR LOCATION</scope>
    <scope>SUBUNIT</scope>
</reference>
<comment type="function">
    <text evidence="3 4">Does not exhibit measurable stand-alone pH-gated sodium channel activity but may form pH-gated heterotrimeric sodium channels.</text>
</comment>
<comment type="catalytic activity">
    <reaction evidence="7">
        <text>Na(+)(in) = Na(+)(out)</text>
        <dbReference type="Rhea" id="RHEA:34963"/>
        <dbReference type="ChEBI" id="CHEBI:29101"/>
    </reaction>
</comment>
<comment type="subunit">
    <text evidence="4">Homotrimer. Heterotrimer; with other ASIC proteins producing functional channels.</text>
</comment>
<comment type="subcellular location">
    <subcellularLocation>
        <location evidence="4">Cell membrane</location>
        <topology evidence="2">Multi-pass membrane protein</topology>
    </subcellularLocation>
</comment>
<comment type="tissue specificity">
    <text evidence="3">Expressed in central nervous system.</text>
</comment>
<comment type="developmental stage">
    <text>Expressed along the tract of the anterior commissure between 24 and 30 hours post-fertilization (hpf). At 30 hpf, expressed in cells along the tract of the postoptic commissure. Expressed in preoptic area from 48 hpf until 96 hpf. Expressed in posterior hypothalamus, ventral midbrain, hindbrain and retinal ganglion cells by 48 hpf. These domains of expression persisted and strengthened in older embryos.</text>
</comment>
<comment type="similarity">
    <text evidence="6">Belongs to the amiloride-sensitive sodium channel (TC 1.A.6) family. ASIC4 subfamily.</text>
</comment>
<evidence type="ECO:0000250" key="1">
    <source>
        <dbReference type="UniProtKB" id="P78348"/>
    </source>
</evidence>
<evidence type="ECO:0000255" key="2"/>
<evidence type="ECO:0000269" key="3">
    <source>
    </source>
</evidence>
<evidence type="ECO:0000269" key="4">
    <source>
    </source>
</evidence>
<evidence type="ECO:0000303" key="5">
    <source>
    </source>
</evidence>
<evidence type="ECO:0000305" key="6"/>
<evidence type="ECO:0000305" key="7">
    <source>
    </source>
</evidence>
<accession>Q708S3</accession>
<keyword id="KW-1003">Cell membrane</keyword>
<keyword id="KW-1015">Disulfide bond</keyword>
<keyword id="KW-0325">Glycoprotein</keyword>
<keyword id="KW-0407">Ion channel</keyword>
<keyword id="KW-0406">Ion transport</keyword>
<keyword id="KW-0472">Membrane</keyword>
<keyword id="KW-1185">Reference proteome</keyword>
<keyword id="KW-0915">Sodium</keyword>
<keyword id="KW-0894">Sodium channel</keyword>
<keyword id="KW-0739">Sodium transport</keyword>
<keyword id="KW-0812">Transmembrane</keyword>
<keyword id="KW-1133">Transmembrane helix</keyword>
<keyword id="KW-0813">Transport</keyword>
<dbReference type="EMBL" id="AJ609620">
    <property type="protein sequence ID" value="CAE81923.1"/>
    <property type="molecule type" value="mRNA"/>
</dbReference>
<dbReference type="RefSeq" id="NP_999951.1">
    <property type="nucleotide sequence ID" value="NM_214786.1"/>
</dbReference>
<dbReference type="SMR" id="Q708S3"/>
<dbReference type="FunCoup" id="Q708S3">
    <property type="interactions" value="703"/>
</dbReference>
<dbReference type="STRING" id="7955.ENSDARP00000095487"/>
<dbReference type="TCDB" id="1.A.6.1.7">
    <property type="family name" value="the epithelial na(+) channel (enac) family"/>
</dbReference>
<dbReference type="GlyCosmos" id="Q708S3">
    <property type="glycosylation" value="6 sites, No reported glycans"/>
</dbReference>
<dbReference type="PaxDb" id="7955-ENSDARP00000095487"/>
<dbReference type="Ensembl" id="ENSDART00000104716">
    <property type="protein sequence ID" value="ENSDARP00000095487"/>
    <property type="gene ID" value="ENSDARG00000004243"/>
</dbReference>
<dbReference type="GeneID" id="407667"/>
<dbReference type="KEGG" id="dre:407667"/>
<dbReference type="AGR" id="ZFIN:ZDB-GENE-040513-6"/>
<dbReference type="CTD" id="407667"/>
<dbReference type="ZFIN" id="ZDB-GENE-040513-6">
    <property type="gene designation" value="asic4b"/>
</dbReference>
<dbReference type="eggNOG" id="KOG4294">
    <property type="taxonomic scope" value="Eukaryota"/>
</dbReference>
<dbReference type="HOGENOM" id="CLU_020415_1_2_1"/>
<dbReference type="InParanoid" id="Q708S3"/>
<dbReference type="OMA" id="GQFHHVT"/>
<dbReference type="OrthoDB" id="6502088at2759"/>
<dbReference type="PhylomeDB" id="Q708S3"/>
<dbReference type="TreeFam" id="TF330663"/>
<dbReference type="PRO" id="PR:Q708S3"/>
<dbReference type="Proteomes" id="UP000000437">
    <property type="component" value="Chromosome 6"/>
</dbReference>
<dbReference type="Bgee" id="ENSDARG00000004243">
    <property type="expression patterns" value="Expressed in retina and 5 other cell types or tissues"/>
</dbReference>
<dbReference type="GO" id="GO:0005886">
    <property type="term" value="C:plasma membrane"/>
    <property type="evidence" value="ECO:0000314"/>
    <property type="project" value="ZFIN"/>
</dbReference>
<dbReference type="GO" id="GO:0015280">
    <property type="term" value="F:ligand-gated sodium channel activity"/>
    <property type="evidence" value="ECO:0000318"/>
    <property type="project" value="GO_Central"/>
</dbReference>
<dbReference type="GO" id="GO:0005261">
    <property type="term" value="F:monoatomic cation channel activity"/>
    <property type="evidence" value="ECO:0000353"/>
    <property type="project" value="ZFIN"/>
</dbReference>
<dbReference type="GO" id="GO:0048545">
    <property type="term" value="P:response to steroid hormone"/>
    <property type="evidence" value="ECO:0000270"/>
    <property type="project" value="ZFIN"/>
</dbReference>
<dbReference type="GO" id="GO:0035725">
    <property type="term" value="P:sodium ion transmembrane transport"/>
    <property type="evidence" value="ECO:0000318"/>
    <property type="project" value="GO_Central"/>
</dbReference>
<dbReference type="FunFam" id="2.60.470.10:FF:000001">
    <property type="entry name" value="Acid-sensing (proton-gated) ion channel family member 4a"/>
    <property type="match status" value="1"/>
</dbReference>
<dbReference type="FunFam" id="1.10.287.770:FF:000001">
    <property type="entry name" value="Acid-sensing ion channel subunit 1"/>
    <property type="match status" value="1"/>
</dbReference>
<dbReference type="Gene3D" id="2.60.470.10">
    <property type="entry name" value="Acid-sensing ion channels like domains"/>
    <property type="match status" value="1"/>
</dbReference>
<dbReference type="Gene3D" id="1.10.287.770">
    <property type="entry name" value="YojJ-like"/>
    <property type="match status" value="1"/>
</dbReference>
<dbReference type="InterPro" id="IPR001873">
    <property type="entry name" value="ENaC"/>
</dbReference>
<dbReference type="InterPro" id="IPR020903">
    <property type="entry name" value="ENaC_CS"/>
</dbReference>
<dbReference type="PANTHER" id="PTHR11690:SF13">
    <property type="entry name" value="ACID-SENSING ION CHANNEL 4"/>
    <property type="match status" value="1"/>
</dbReference>
<dbReference type="PANTHER" id="PTHR11690">
    <property type="entry name" value="AMILORIDE-SENSITIVE SODIUM CHANNEL-RELATED"/>
    <property type="match status" value="1"/>
</dbReference>
<dbReference type="Pfam" id="PF00858">
    <property type="entry name" value="ASC"/>
    <property type="match status" value="1"/>
</dbReference>
<dbReference type="PRINTS" id="PR01078">
    <property type="entry name" value="AMINACHANNEL"/>
</dbReference>
<dbReference type="PROSITE" id="PS01206">
    <property type="entry name" value="ASC"/>
    <property type="match status" value="1"/>
</dbReference>
<organism>
    <name type="scientific">Danio rerio</name>
    <name type="common">Zebrafish</name>
    <name type="synonym">Brachydanio rerio</name>
    <dbReference type="NCBI Taxonomy" id="7955"/>
    <lineage>
        <taxon>Eukaryota</taxon>
        <taxon>Metazoa</taxon>
        <taxon>Chordata</taxon>
        <taxon>Craniata</taxon>
        <taxon>Vertebrata</taxon>
        <taxon>Euteleostomi</taxon>
        <taxon>Actinopterygii</taxon>
        <taxon>Neopterygii</taxon>
        <taxon>Teleostei</taxon>
        <taxon>Ostariophysi</taxon>
        <taxon>Cypriniformes</taxon>
        <taxon>Danionidae</taxon>
        <taxon>Danioninae</taxon>
        <taxon>Danio</taxon>
    </lineage>
</organism>
<proteinExistence type="evidence at protein level"/>
<sequence>MPIEFVCKIKFAEGEEAKGASTEGGGTGMLDEGLRRQKEGMADLASFASSSSLHGLARALGTSERLGFRQTLWGLALLVSLGLFLYQATWSAATYLERPHLAALREETRRELTFPAITLCNVNRFRFSALTDADIYHLANLTGLPPKSRKGHRPSELQYPPPNMLDIFQRTGHQLEDMLKSCNFSGQNCSSEDFSVVYTRYGKCYTFNGNKTSPKRVRQGGTGNGLEMMLDIQQDEYLPIWRETNETTLEAGIRVQIHSQNEPPYIHQLGFGVSPGFQTFVSCQEQRLTYLPQPWGNCRASSEPVIPGYDTYSVSACRLHCESTQVQRECNCRMVHMPGDADICAPSKIKCVDKALASLQKSTGDSCPCETPCNLTRYGKELSMVKIPSRGSARYLSRKYQKSEEYIRDNFLILDIFFEALNYETIEQKKAYDIAGLLGDIGGQMGLFIGASILTILEILDYIYEVAKNKIKQLLKPKKSQKQTNQRNLIQEQIQRTKNLREQNLKAQLTAGAIATVRFEEVKVKAANDVAQPHSAHPTSVLPNHHNAQQAVQQDFAC</sequence>